<accession>Q7WBA1</accession>
<comment type="function">
    <text evidence="1">Required for formate dehydrogenase (FDH) activity. Acts as a sulfur carrier protein that transfers sulfur from IscS to the molybdenum cofactor prior to its insertion into FDH.</text>
</comment>
<comment type="subcellular location">
    <subcellularLocation>
        <location evidence="1">Cytoplasm</location>
    </subcellularLocation>
</comment>
<comment type="similarity">
    <text evidence="1">Belongs to the FdhD family.</text>
</comment>
<feature type="chain" id="PRO_0000152892" description="Sulfur carrier protein FdhD">
    <location>
        <begin position="1"/>
        <end position="276"/>
    </location>
</feature>
<feature type="active site" description="Cysteine persulfide intermediate" evidence="1">
    <location>
        <position position="120"/>
    </location>
</feature>
<organism>
    <name type="scientific">Bordetella parapertussis (strain 12822 / ATCC BAA-587 / NCTC 13253)</name>
    <dbReference type="NCBI Taxonomy" id="257311"/>
    <lineage>
        <taxon>Bacteria</taxon>
        <taxon>Pseudomonadati</taxon>
        <taxon>Pseudomonadota</taxon>
        <taxon>Betaproteobacteria</taxon>
        <taxon>Burkholderiales</taxon>
        <taxon>Alcaligenaceae</taxon>
        <taxon>Bordetella</taxon>
    </lineage>
</organism>
<dbReference type="EMBL" id="BX640426">
    <property type="protein sequence ID" value="CAE36405.1"/>
    <property type="molecule type" value="Genomic_DNA"/>
</dbReference>
<dbReference type="RefSeq" id="WP_010927855.1">
    <property type="nucleotide sequence ID" value="NC_002928.3"/>
</dbReference>
<dbReference type="SMR" id="Q7WBA1"/>
<dbReference type="GeneID" id="93202853"/>
<dbReference type="KEGG" id="bpa:BPP1104"/>
<dbReference type="HOGENOM" id="CLU_056887_2_0_4"/>
<dbReference type="Proteomes" id="UP000001421">
    <property type="component" value="Chromosome"/>
</dbReference>
<dbReference type="GO" id="GO:0005737">
    <property type="term" value="C:cytoplasm"/>
    <property type="evidence" value="ECO:0007669"/>
    <property type="project" value="UniProtKB-SubCell"/>
</dbReference>
<dbReference type="GO" id="GO:0097163">
    <property type="term" value="F:sulfur carrier activity"/>
    <property type="evidence" value="ECO:0007669"/>
    <property type="project" value="UniProtKB-UniRule"/>
</dbReference>
<dbReference type="GO" id="GO:0016783">
    <property type="term" value="F:sulfurtransferase activity"/>
    <property type="evidence" value="ECO:0007669"/>
    <property type="project" value="InterPro"/>
</dbReference>
<dbReference type="GO" id="GO:0006777">
    <property type="term" value="P:Mo-molybdopterin cofactor biosynthetic process"/>
    <property type="evidence" value="ECO:0007669"/>
    <property type="project" value="UniProtKB-UniRule"/>
</dbReference>
<dbReference type="Gene3D" id="3.10.20.10">
    <property type="match status" value="1"/>
</dbReference>
<dbReference type="Gene3D" id="3.40.140.10">
    <property type="entry name" value="Cytidine Deaminase, domain 2"/>
    <property type="match status" value="1"/>
</dbReference>
<dbReference type="HAMAP" id="MF_00187">
    <property type="entry name" value="FdhD"/>
    <property type="match status" value="1"/>
</dbReference>
<dbReference type="InterPro" id="IPR016193">
    <property type="entry name" value="Cytidine_deaminase-like"/>
</dbReference>
<dbReference type="InterPro" id="IPR003786">
    <property type="entry name" value="FdhD"/>
</dbReference>
<dbReference type="NCBIfam" id="TIGR00129">
    <property type="entry name" value="fdhD_narQ"/>
    <property type="match status" value="1"/>
</dbReference>
<dbReference type="PANTHER" id="PTHR30592">
    <property type="entry name" value="FORMATE DEHYDROGENASE"/>
    <property type="match status" value="1"/>
</dbReference>
<dbReference type="PANTHER" id="PTHR30592:SF1">
    <property type="entry name" value="SULFUR CARRIER PROTEIN FDHD"/>
    <property type="match status" value="1"/>
</dbReference>
<dbReference type="Pfam" id="PF02634">
    <property type="entry name" value="FdhD-NarQ"/>
    <property type="match status" value="1"/>
</dbReference>
<dbReference type="PIRSF" id="PIRSF015626">
    <property type="entry name" value="FdhD"/>
    <property type="match status" value="1"/>
</dbReference>
<dbReference type="SUPFAM" id="SSF53927">
    <property type="entry name" value="Cytidine deaminase-like"/>
    <property type="match status" value="1"/>
</dbReference>
<keyword id="KW-0963">Cytoplasm</keyword>
<keyword id="KW-0501">Molybdenum cofactor biosynthesis</keyword>
<protein>
    <recommendedName>
        <fullName evidence="1">Sulfur carrier protein FdhD</fullName>
    </recommendedName>
</protein>
<name>FDHD_BORPA</name>
<sequence>MDRLHTSSADWPDHLATQVVRVRGGVLQAAGQSDHVAEETPVALEFNGISHATMLVTPTHLDDFALGFALTEGIVGGMADVRGVELETRCDGIVVQVEIATSCEVRLKERRRAMAGRTGCGLCGVETLPEVVRDVAPAADSDALPVHNVLRAMQSLRSRQTLHDATGATHAAGWADASGEVVLAREDVGRHNALDKLIGALARQGIAPLPGMAVVSSRASFEMVQKTASAGIPILAAVSAPTALAIRLARQTNVTLLGFVRNTDATIYSHPQRIAA</sequence>
<reference key="1">
    <citation type="journal article" date="2003" name="Nat. Genet.">
        <title>Comparative analysis of the genome sequences of Bordetella pertussis, Bordetella parapertussis and Bordetella bronchiseptica.</title>
        <authorList>
            <person name="Parkhill J."/>
            <person name="Sebaihia M."/>
            <person name="Preston A."/>
            <person name="Murphy L.D."/>
            <person name="Thomson N.R."/>
            <person name="Harris D.E."/>
            <person name="Holden M.T.G."/>
            <person name="Churcher C.M."/>
            <person name="Bentley S.D."/>
            <person name="Mungall K.L."/>
            <person name="Cerdeno-Tarraga A.-M."/>
            <person name="Temple L."/>
            <person name="James K.D."/>
            <person name="Harris B."/>
            <person name="Quail M.A."/>
            <person name="Achtman M."/>
            <person name="Atkin R."/>
            <person name="Baker S."/>
            <person name="Basham D."/>
            <person name="Bason N."/>
            <person name="Cherevach I."/>
            <person name="Chillingworth T."/>
            <person name="Collins M."/>
            <person name="Cronin A."/>
            <person name="Davis P."/>
            <person name="Doggett J."/>
            <person name="Feltwell T."/>
            <person name="Goble A."/>
            <person name="Hamlin N."/>
            <person name="Hauser H."/>
            <person name="Holroyd S."/>
            <person name="Jagels K."/>
            <person name="Leather S."/>
            <person name="Moule S."/>
            <person name="Norberczak H."/>
            <person name="O'Neil S."/>
            <person name="Ormond D."/>
            <person name="Price C."/>
            <person name="Rabbinowitsch E."/>
            <person name="Rutter S."/>
            <person name="Sanders M."/>
            <person name="Saunders D."/>
            <person name="Seeger K."/>
            <person name="Sharp S."/>
            <person name="Simmonds M."/>
            <person name="Skelton J."/>
            <person name="Squares R."/>
            <person name="Squares S."/>
            <person name="Stevens K."/>
            <person name="Unwin L."/>
            <person name="Whitehead S."/>
            <person name="Barrell B.G."/>
            <person name="Maskell D.J."/>
        </authorList>
    </citation>
    <scope>NUCLEOTIDE SEQUENCE [LARGE SCALE GENOMIC DNA]</scope>
    <source>
        <strain>12822 / ATCC BAA-587 / NCTC 13253</strain>
    </source>
</reference>
<proteinExistence type="inferred from homology"/>
<gene>
    <name evidence="1" type="primary">fdhD</name>
    <name type="ordered locus">BPP1104</name>
</gene>
<evidence type="ECO:0000255" key="1">
    <source>
        <dbReference type="HAMAP-Rule" id="MF_00187"/>
    </source>
</evidence>